<sequence length="31" mass="4195">MPRRRRASRRIRRRRRPRVSRRRRRGGRRRR</sequence>
<keyword id="KW-0158">Chromosome</keyword>
<keyword id="KW-0217">Developmental protein</keyword>
<keyword id="KW-0221">Differentiation</keyword>
<keyword id="KW-0903">Direct protein sequencing</keyword>
<keyword id="KW-0226">DNA condensation</keyword>
<keyword id="KW-0238">DNA-binding</keyword>
<keyword id="KW-0544">Nucleosome core</keyword>
<keyword id="KW-0539">Nucleus</keyword>
<keyword id="KW-0744">Spermatogenesis</keyword>
<proteinExistence type="evidence at protein level"/>
<organism>
    <name type="scientific">Oncorhynchus mykiss</name>
    <name type="common">Rainbow trout</name>
    <name type="synonym">Salmo gairdneri</name>
    <dbReference type="NCBI Taxonomy" id="8022"/>
    <lineage>
        <taxon>Eukaryota</taxon>
        <taxon>Metazoa</taxon>
        <taxon>Chordata</taxon>
        <taxon>Craniata</taxon>
        <taxon>Vertebrata</taxon>
        <taxon>Euteleostomi</taxon>
        <taxon>Actinopterygii</taxon>
        <taxon>Neopterygii</taxon>
        <taxon>Teleostei</taxon>
        <taxon>Protacanthopterygii</taxon>
        <taxon>Salmoniformes</taxon>
        <taxon>Salmonidae</taxon>
        <taxon>Salmoninae</taxon>
        <taxon>Oncorhynchus</taxon>
    </lineage>
</organism>
<protein>
    <recommendedName>
        <fullName>Protamine-1B</fullName>
    </recommendedName>
</protein>
<evidence type="ECO:0000256" key="1">
    <source>
        <dbReference type="SAM" id="MobiDB-lite"/>
    </source>
</evidence>
<evidence type="ECO:0000269" key="2">
    <source>
    </source>
</evidence>
<comment type="function">
    <text>Protamines substitute for histones in the chromatin of sperm during the haploid phase of spermatogenesis. They compact sperm DNA into a highly condensed, stable and inactive complex.</text>
</comment>
<comment type="subcellular location">
    <subcellularLocation>
        <location>Nucleus</location>
    </subcellularLocation>
    <subcellularLocation>
        <location>Chromosome</location>
    </subcellularLocation>
</comment>
<comment type="tissue specificity">
    <text>Testis.</text>
</comment>
<comment type="miscellaneous">
    <text>Both of these sequences differ from one of the protamine CIII minor components in having Arg-10 instead of Pro-10.</text>
</comment>
<feature type="initiator methionine" description="Removed" evidence="2">
    <location>
        <position position="1"/>
    </location>
</feature>
<feature type="peptide" id="PRO_0000044308" description="Protamine-1B">
    <location>
        <begin position="2"/>
        <end position="31"/>
    </location>
</feature>
<feature type="region of interest" description="Disordered" evidence="1">
    <location>
        <begin position="1"/>
        <end position="31"/>
    </location>
</feature>
<name>PRT1B_ONCMY</name>
<dbReference type="PIR" id="A93723">
    <property type="entry name" value="IRTR78"/>
</dbReference>
<dbReference type="Proteomes" id="UP000694395">
    <property type="component" value="Unplaced"/>
</dbReference>
<dbReference type="GO" id="GO:0000786">
    <property type="term" value="C:nucleosome"/>
    <property type="evidence" value="ECO:0007669"/>
    <property type="project" value="UniProtKB-KW"/>
</dbReference>
<dbReference type="GO" id="GO:0005634">
    <property type="term" value="C:nucleus"/>
    <property type="evidence" value="ECO:0007669"/>
    <property type="project" value="UniProtKB-SubCell"/>
</dbReference>
<dbReference type="GO" id="GO:0003677">
    <property type="term" value="F:DNA binding"/>
    <property type="evidence" value="ECO:0007669"/>
    <property type="project" value="UniProtKB-KW"/>
</dbReference>
<dbReference type="GO" id="GO:0030154">
    <property type="term" value="P:cell differentiation"/>
    <property type="evidence" value="ECO:0007669"/>
    <property type="project" value="UniProtKB-KW"/>
</dbReference>
<dbReference type="GO" id="GO:0030261">
    <property type="term" value="P:chromosome condensation"/>
    <property type="evidence" value="ECO:0007669"/>
    <property type="project" value="UniProtKB-KW"/>
</dbReference>
<dbReference type="GO" id="GO:0007283">
    <property type="term" value="P:spermatogenesis"/>
    <property type="evidence" value="ECO:0007669"/>
    <property type="project" value="UniProtKB-KW"/>
</dbReference>
<reference key="1">
    <citation type="journal article" date="1981" name="Nucleic Acids Res.">
        <title>Molecular analysis of the protamine multi-gene family in rainbow trout testis.</title>
        <authorList>
            <person name="Gedamu L."/>
            <person name="Wosnick M.A."/>
            <person name="Connor W."/>
            <person name="Watson D.C."/>
            <person name="Dixon G.H."/>
            <person name="Iatrou K."/>
        </authorList>
    </citation>
    <scope>NUCLEOTIDE SEQUENCE (CLONES PRTP178 AND PRTP94)</scope>
</reference>
<reference key="2">
    <citation type="journal article" date="1986" name="Eur. J. Biochem.">
        <title>Rainbow trout protamines. Amino acid sequences of six distinct proteins from a single testis.</title>
        <authorList>
            <person name="McKay D.J."/>
            <person name="Renaux B.S."/>
            <person name="Dixon G.H."/>
        </authorList>
    </citation>
    <scope>PROTEIN SEQUENCE OF 2-31</scope>
</reference>
<accession>P02332</accession>